<organism>
    <name type="scientific">Saccharomyces cerevisiae (strain AWRI1631)</name>
    <name type="common">Baker's yeast</name>
    <dbReference type="NCBI Taxonomy" id="545124"/>
    <lineage>
        <taxon>Eukaryota</taxon>
        <taxon>Fungi</taxon>
        <taxon>Dikarya</taxon>
        <taxon>Ascomycota</taxon>
        <taxon>Saccharomycotina</taxon>
        <taxon>Saccharomycetes</taxon>
        <taxon>Saccharomycetales</taxon>
        <taxon>Saccharomycetaceae</taxon>
        <taxon>Saccharomyces</taxon>
    </lineage>
</organism>
<keyword id="KW-0256">Endoplasmic reticulum</keyword>
<keyword id="KW-0472">Membrane</keyword>
<keyword id="KW-0812">Transmembrane</keyword>
<keyword id="KW-1133">Transmembrane helix</keyword>
<gene>
    <name type="primary">AIM27</name>
    <name type="synonym">EMC3</name>
    <name type="ORF">AWRI1631_110210</name>
</gene>
<evidence type="ECO:0000250" key="1"/>
<evidence type="ECO:0000255" key="2"/>
<evidence type="ECO:0000305" key="3"/>
<dbReference type="EMBL" id="ABSV01001416">
    <property type="protein sequence ID" value="EDZ71080.1"/>
    <property type="status" value="ALT_FRAME"/>
    <property type="molecule type" value="Genomic_DNA"/>
</dbReference>
<dbReference type="SMR" id="B5VLV9"/>
<dbReference type="OrthoDB" id="37941at4893"/>
<dbReference type="Proteomes" id="UP000008988">
    <property type="component" value="Unassembled WGS sequence"/>
</dbReference>
<dbReference type="GO" id="GO:0072546">
    <property type="term" value="C:EMC complex"/>
    <property type="evidence" value="ECO:0007669"/>
    <property type="project" value="TreeGrafter"/>
</dbReference>
<dbReference type="GO" id="GO:0034975">
    <property type="term" value="P:protein folding in endoplasmic reticulum"/>
    <property type="evidence" value="ECO:0007669"/>
    <property type="project" value="TreeGrafter"/>
</dbReference>
<dbReference type="InterPro" id="IPR008568">
    <property type="entry name" value="EMC3"/>
</dbReference>
<dbReference type="InterPro" id="IPR002809">
    <property type="entry name" value="EMC3/TMCO1"/>
</dbReference>
<dbReference type="PANTHER" id="PTHR13116">
    <property type="entry name" value="ER MEMBRANE PROTEIN COMPLEX SUBUNIT 3"/>
    <property type="match status" value="1"/>
</dbReference>
<dbReference type="PANTHER" id="PTHR13116:SF5">
    <property type="entry name" value="ER MEMBRANE PROTEIN COMPLEX SUBUNIT 3"/>
    <property type="match status" value="1"/>
</dbReference>
<dbReference type="Pfam" id="PF01956">
    <property type="entry name" value="EMC3_TMCO1"/>
    <property type="match status" value="1"/>
</dbReference>
<dbReference type="PIRSF" id="PIRSF010045">
    <property type="entry name" value="DUF850_TM_euk"/>
    <property type="match status" value="1"/>
</dbReference>
<dbReference type="SMART" id="SM01415">
    <property type="entry name" value="DUF106"/>
    <property type="match status" value="1"/>
</dbReference>
<sequence length="253" mass="28321">MLLDDQLKYWVLLPISIVMVLTGVLKQYIMTLITGSSANEAQPRVKLTEWQYLQWAQLLIGNGGNLSSDAFAAKKEFLVKDLTEERHLAKAKQQGGSQAGEVPNPFNDPNMSNAMMNMAKGNMASFIPQTIIMWWVNHFFAGFILMQLPFPLTAKFKEMLQTGIICQDLDVRWVSSISWYFISVLGLNPVYNLIGLNDQDMGIQAGIGGPQGPQGPPQSQVDKAMHAMANDLTIIQHETCLDNVEQRVLKQYM</sequence>
<protein>
    <recommendedName>
        <fullName>ER membrane protein complex subunit 3</fullName>
    </recommendedName>
    <alternativeName>
        <fullName>Altered inheritance rate of mitochondria protein 27</fullName>
    </alternativeName>
</protein>
<proteinExistence type="inferred from homology"/>
<feature type="chain" id="PRO_0000377674" description="ER membrane protein complex subunit 3">
    <location>
        <begin position="1"/>
        <end position="253"/>
    </location>
</feature>
<feature type="transmembrane region" description="Helical" evidence="2">
    <location>
        <begin position="10"/>
        <end position="30"/>
    </location>
</feature>
<feature type="transmembrane region" description="Helical" evidence="2">
    <location>
        <begin position="126"/>
        <end position="146"/>
    </location>
</feature>
<feature type="transmembrane region" description="Helical" evidence="2">
    <location>
        <begin position="176"/>
        <end position="196"/>
    </location>
</feature>
<name>EMC3_YEAS6</name>
<comment type="function">
    <text evidence="1">The EMC seems to be required for efficient folding of proteins in the endoplasmic reticulum (ER).</text>
</comment>
<comment type="subunit">
    <text evidence="1">Component of the ER membrane protein complex (EMC), which is composed of EMC1, EMC2, EMC3, EMC4, EMC5 and EMC6.</text>
</comment>
<comment type="subcellular location">
    <subcellularLocation>
        <location evidence="1">Endoplasmic reticulum membrane</location>
        <topology evidence="1">Multi-pass membrane protein</topology>
    </subcellularLocation>
</comment>
<comment type="similarity">
    <text evidence="3">Belongs to the EMC3 family.</text>
</comment>
<comment type="sequence caution" evidence="3">
    <conflict type="frameshift">
        <sequence resource="EMBL-CDS" id="EDZ71080"/>
    </conflict>
</comment>
<accession>B5VLV9</accession>
<reference key="1">
    <citation type="journal article" date="2008" name="FEMS Yeast Res.">
        <title>Comparative genome analysis of a Saccharomyces cerevisiae wine strain.</title>
        <authorList>
            <person name="Borneman A.R."/>
            <person name="Forgan A.H."/>
            <person name="Pretorius I.S."/>
            <person name="Chambers P.J."/>
        </authorList>
    </citation>
    <scope>NUCLEOTIDE SEQUENCE [LARGE SCALE GENOMIC DNA]</scope>
    <source>
        <strain>AWRI1631</strain>
    </source>
</reference>